<reference key="1">
    <citation type="journal article" date="2005" name="Nature">
        <title>The map-based sequence of the rice genome.</title>
        <authorList>
            <consortium name="International rice genome sequencing project (IRGSP)"/>
        </authorList>
    </citation>
    <scope>NUCLEOTIDE SEQUENCE [LARGE SCALE GENOMIC DNA]</scope>
    <source>
        <strain>cv. Nipponbare</strain>
    </source>
</reference>
<reference key="2">
    <citation type="journal article" date="2008" name="Nucleic Acids Res.">
        <title>The rice annotation project database (RAP-DB): 2008 update.</title>
        <authorList>
            <consortium name="The rice annotation project (RAP)"/>
        </authorList>
    </citation>
    <scope>GENOME REANNOTATION</scope>
    <source>
        <strain>cv. Nipponbare</strain>
    </source>
</reference>
<reference key="3">
    <citation type="journal article" date="2013" name="Rice">
        <title>Improvement of the Oryza sativa Nipponbare reference genome using next generation sequence and optical map data.</title>
        <authorList>
            <person name="Kawahara Y."/>
            <person name="de la Bastide M."/>
            <person name="Hamilton J.P."/>
            <person name="Kanamori H."/>
            <person name="McCombie W.R."/>
            <person name="Ouyang S."/>
            <person name="Schwartz D.C."/>
            <person name="Tanaka T."/>
            <person name="Wu J."/>
            <person name="Zhou S."/>
            <person name="Childs K.L."/>
            <person name="Davidson R.M."/>
            <person name="Lin H."/>
            <person name="Quesada-Ocampo L."/>
            <person name="Vaillancourt B."/>
            <person name="Sakai H."/>
            <person name="Lee S.S."/>
            <person name="Kim J."/>
            <person name="Numa H."/>
            <person name="Itoh T."/>
            <person name="Buell C.R."/>
            <person name="Matsumoto T."/>
        </authorList>
    </citation>
    <scope>GENOME REANNOTATION</scope>
    <source>
        <strain>cv. Nipponbare</strain>
    </source>
</reference>
<reference key="4">
    <citation type="journal article" date="2002" name="Plant Physiol.">
        <title>Cellulose synthase-like genes of rice.</title>
        <authorList>
            <person name="Hazen S.P."/>
            <person name="Scott-Craig J.S."/>
            <person name="Walton J.D."/>
        </authorList>
    </citation>
    <scope>GENE FAMILY</scope>
    <scope>NOMENCLATURE</scope>
</reference>
<reference key="5">
    <citation type="journal article" date="2006" name="Science">
        <title>Cellulose synthase-like CslF genes mediate the synthesis of cell wall (1,3;1,4)-beta-D-glucans.</title>
        <authorList>
            <person name="Burton R.A."/>
            <person name="Wilson S.M."/>
            <person name="Hrmova M."/>
            <person name="Harvey A.J."/>
            <person name="Shirley N.J."/>
            <person name="Medhurst A."/>
            <person name="Stone B.A."/>
            <person name="Newbigin E.J."/>
            <person name="Bacic A."/>
            <person name="Fincher G.B."/>
        </authorList>
    </citation>
    <scope>FUNCTION</scope>
</reference>
<comment type="function">
    <text evidence="1 4">May catalyze both beta-1,3 and beta-1,4 glycosidic linkage on beta-D-glucan. Essential for (1,3;1,4)-beta-D-glucans synthesis in grasses and cereals (Poaceae). The mixed-linked glucans (which are not present in walls of dicotyledons or most other monocotyledonous plants) are particularly important constituents of the walls of the starchy endosperm and aleurone cells of cereal grains such as oats, wheat, rice and barley. They can account for up to 70% by weight of the wall (By similarity).</text>
</comment>
<comment type="subcellular location">
    <subcellularLocation>
        <location evidence="5">Golgi apparatus membrane</location>
        <topology evidence="5">Multi-pass membrane protein</topology>
    </subcellularLocation>
</comment>
<comment type="similarity">
    <text evidence="5">Belongs to the glycosyltransferase 2 family. Plant cellulose synthase-like F subfamily.</text>
</comment>
<comment type="sequence caution" evidence="5">
    <conflict type="erroneous gene model prediction">
        <sequence resource="EMBL-CDS" id="BAF21858"/>
    </conflict>
</comment>
<dbReference type="EC" id="2.4.1.-"/>
<dbReference type="EMBL" id="AP005126">
    <property type="protein sequence ID" value="BAC80027.1"/>
    <property type="molecule type" value="Genomic_DNA"/>
</dbReference>
<dbReference type="EMBL" id="AP008213">
    <property type="protein sequence ID" value="BAF21858.2"/>
    <property type="status" value="ALT_SEQ"/>
    <property type="molecule type" value="Genomic_DNA"/>
</dbReference>
<dbReference type="EMBL" id="AP014963">
    <property type="status" value="NOT_ANNOTATED_CDS"/>
    <property type="molecule type" value="Genomic_DNA"/>
</dbReference>
<dbReference type="SMR" id="Q7XHV0"/>
<dbReference type="FunCoup" id="Q7XHV0">
    <property type="interactions" value="9"/>
</dbReference>
<dbReference type="STRING" id="39947.Q7XHV0"/>
<dbReference type="CAZy" id="GT2">
    <property type="family name" value="Glycosyltransferase Family 2"/>
</dbReference>
<dbReference type="PaxDb" id="39947-Q7XHV0"/>
<dbReference type="KEGG" id="dosa:Os07g0551500"/>
<dbReference type="eggNOG" id="ENOG502QU14">
    <property type="taxonomic scope" value="Eukaryota"/>
</dbReference>
<dbReference type="InParanoid" id="Q7XHV0"/>
<dbReference type="Proteomes" id="UP000000763">
    <property type="component" value="Chromosome 7"/>
</dbReference>
<dbReference type="Proteomes" id="UP000059680">
    <property type="component" value="Chromosome 7"/>
</dbReference>
<dbReference type="GO" id="GO:0000139">
    <property type="term" value="C:Golgi membrane"/>
    <property type="evidence" value="ECO:0007669"/>
    <property type="project" value="UniProtKB-SubCell"/>
</dbReference>
<dbReference type="GO" id="GO:0005886">
    <property type="term" value="C:plasma membrane"/>
    <property type="evidence" value="ECO:0000318"/>
    <property type="project" value="GO_Central"/>
</dbReference>
<dbReference type="GO" id="GO:0016760">
    <property type="term" value="F:cellulose synthase (UDP-forming) activity"/>
    <property type="evidence" value="ECO:0007669"/>
    <property type="project" value="InterPro"/>
</dbReference>
<dbReference type="GO" id="GO:0071555">
    <property type="term" value="P:cell wall organization"/>
    <property type="evidence" value="ECO:0007669"/>
    <property type="project" value="UniProtKB-KW"/>
</dbReference>
<dbReference type="GO" id="GO:0030244">
    <property type="term" value="P:cellulose biosynthetic process"/>
    <property type="evidence" value="ECO:0007669"/>
    <property type="project" value="InterPro"/>
</dbReference>
<dbReference type="GO" id="GO:0009833">
    <property type="term" value="P:plant-type primary cell wall biogenesis"/>
    <property type="evidence" value="ECO:0000318"/>
    <property type="project" value="GO_Central"/>
</dbReference>
<dbReference type="FunFam" id="3.90.550.10:FF:000027">
    <property type="entry name" value="Cellulose synthase-like protein D4"/>
    <property type="match status" value="1"/>
</dbReference>
<dbReference type="Gene3D" id="3.90.550.10">
    <property type="entry name" value="Spore Coat Polysaccharide Biosynthesis Protein SpsA, Chain A"/>
    <property type="match status" value="1"/>
</dbReference>
<dbReference type="InterPro" id="IPR005150">
    <property type="entry name" value="Cellulose_synth"/>
</dbReference>
<dbReference type="InterPro" id="IPR029044">
    <property type="entry name" value="Nucleotide-diphossugar_trans"/>
</dbReference>
<dbReference type="PANTHER" id="PTHR13301">
    <property type="entry name" value="X-BOX TRANSCRIPTION FACTOR-RELATED"/>
    <property type="match status" value="1"/>
</dbReference>
<dbReference type="Pfam" id="PF03552">
    <property type="entry name" value="Cellulose_synt"/>
    <property type="match status" value="2"/>
</dbReference>
<dbReference type="SUPFAM" id="SSF53448">
    <property type="entry name" value="Nucleotide-diphospho-sugar transferases"/>
    <property type="match status" value="1"/>
</dbReference>
<proteinExistence type="inferred from homology"/>
<keyword id="KW-0961">Cell wall biogenesis/degradation</keyword>
<keyword id="KW-0328">Glycosyltransferase</keyword>
<keyword id="KW-0333">Golgi apparatus</keyword>
<keyword id="KW-0472">Membrane</keyword>
<keyword id="KW-1185">Reference proteome</keyword>
<keyword id="KW-0808">Transferase</keyword>
<keyword id="KW-0812">Transmembrane</keyword>
<keyword id="KW-1133">Transmembrane helix</keyword>
<protein>
    <recommendedName>
        <fullName>Probable mixed-linked glucan synthase 9</fullName>
        <ecNumber>2.4.1.-</ecNumber>
    </recommendedName>
    <alternativeName>
        <fullName>1,3;1,4-beta-D-glucan synthase 9</fullName>
    </alternativeName>
    <alternativeName>
        <fullName>Cellulose synthase-like protein F9</fullName>
    </alternativeName>
    <alternativeName>
        <fullName>OsCslF9</fullName>
    </alternativeName>
</protein>
<sequence>MALSPAAAGRTGRNNNNDAGLADPLLPAGGGGGGGKDKYWVPADEEEEICRGEDGGRPPAPPLLYRTFKVSGVLLHPYRLLTLVRLIAVVLFLAWRLKHRDSDAMWLWWISIAGDFWFGVTWLLNQASKLNPVKRVPDLSLLRRRFDDGGLPGIDVFINTVDPVDEPMLYTMNSILSILATDYPADRHAAYLSDDGASLAHYEGLIETARFAALWVPFCRKHRVEPRAPESYFAAKAAPYAGPALPEEFFGDRRLVRREYEEFKARLDALFTDIPQRSEASVGNANTKGAKATLMADGTPWPGTWTEPAENHKKGQHAGIVKVMLSHPGEEPQLGMPASSGHPLDFSAVDVRLPILVYIAREKRPGYDHQKKAGAMNAQLRVSALLSNAPFIFNFDGDHYINNSQAFRAALCFMLDCRHGDDTAFVQFPQRFDDVDPTDRYCNHNRVFFDATLLGLNGVQGPSYVGTGCMFRRVALYGADPPRWRPEDDDAKALGCPGRYGNSMPFINTIPAAASQERSIASPAAASLDETAAMAEVEEVMTCAYEDGTEWGDGVGWVYDIATEDVVTGFRLHRKGWRSMYCAMEPDAFRGTAPINLTERLYQILRWSGGSLEMFFSRNCPLLAGCRLRPMQRVAYANMTAYPVSALFMVVYDLLPVIWLSHHGEFHIQKPFSTYVAYLVAVIAMIEVIGLVEIKWAGLTLLDWWRNEQFYMIGATGVYLAAVLHIVLKRLLGLKGVRFKLTAKQLAGGARERFAELYDVHWSPLLAPTVVVMAVNVTAIGAAAGKAVVGGWTPAQVAGASAGLVFNVWVLVLLYPFALGIMGRWSKRPCALFALLVAACAAVAAGFVAVHAVLAAGSAAPSWLGWSRGATAILPSSWRLKRGF</sequence>
<accession>Q7XHV0</accession>
<accession>Q0D5L5</accession>
<evidence type="ECO:0000250" key="1"/>
<evidence type="ECO:0000255" key="2"/>
<evidence type="ECO:0000256" key="3">
    <source>
        <dbReference type="SAM" id="MobiDB-lite"/>
    </source>
</evidence>
<evidence type="ECO:0000269" key="4">
    <source>
    </source>
</evidence>
<evidence type="ECO:0000305" key="5"/>
<organism>
    <name type="scientific">Oryza sativa subsp. japonica</name>
    <name type="common">Rice</name>
    <dbReference type="NCBI Taxonomy" id="39947"/>
    <lineage>
        <taxon>Eukaryota</taxon>
        <taxon>Viridiplantae</taxon>
        <taxon>Streptophyta</taxon>
        <taxon>Embryophyta</taxon>
        <taxon>Tracheophyta</taxon>
        <taxon>Spermatophyta</taxon>
        <taxon>Magnoliopsida</taxon>
        <taxon>Liliopsida</taxon>
        <taxon>Poales</taxon>
        <taxon>Poaceae</taxon>
        <taxon>BOP clade</taxon>
        <taxon>Oryzoideae</taxon>
        <taxon>Oryzeae</taxon>
        <taxon>Oryzinae</taxon>
        <taxon>Oryza</taxon>
        <taxon>Oryza sativa</taxon>
    </lineage>
</organism>
<name>CSLF9_ORYSJ</name>
<gene>
    <name type="primary">CSLF9</name>
    <name type="ordered locus">Os07g0551600</name>
    <name type="ordered locus">Os07g0551500</name>
    <name type="ordered locus">LOC_Os07g36610</name>
    <name type="ORF">OSJNBb0041B22.113</name>
</gene>
<feature type="chain" id="PRO_0000319409" description="Probable mixed-linked glucan synthase 9">
    <location>
        <begin position="1"/>
        <end position="884"/>
    </location>
</feature>
<feature type="transmembrane region" description="Helical" evidence="2">
    <location>
        <begin position="73"/>
        <end position="93"/>
    </location>
</feature>
<feature type="transmembrane region" description="Helical" evidence="2">
    <location>
        <begin position="104"/>
        <end position="124"/>
    </location>
</feature>
<feature type="transmembrane region" description="Helical" evidence="2">
    <location>
        <begin position="640"/>
        <end position="660"/>
    </location>
</feature>
<feature type="transmembrane region" description="Helical" evidence="2">
    <location>
        <begin position="672"/>
        <end position="692"/>
    </location>
</feature>
<feature type="transmembrane region" description="Helical" evidence="2">
    <location>
        <begin position="708"/>
        <end position="728"/>
    </location>
</feature>
<feature type="transmembrane region" description="Helical" evidence="2">
    <location>
        <begin position="765"/>
        <end position="785"/>
    </location>
</feature>
<feature type="transmembrane region" description="Helical" evidence="2">
    <location>
        <begin position="802"/>
        <end position="822"/>
    </location>
</feature>
<feature type="transmembrane region" description="Helical" evidence="2">
    <location>
        <begin position="830"/>
        <end position="850"/>
    </location>
</feature>
<feature type="region of interest" description="Disordered" evidence="3">
    <location>
        <begin position="1"/>
        <end position="34"/>
    </location>
</feature>
<feature type="compositionally biased region" description="Low complexity" evidence="3">
    <location>
        <begin position="1"/>
        <end position="27"/>
    </location>
</feature>
<feature type="active site" evidence="2">
    <location>
        <position position="195"/>
    </location>
</feature>
<feature type="active site" evidence="2">
    <location>
        <position position="565"/>
    </location>
</feature>
<feature type="binding site" evidence="2">
    <location>
        <position position="396"/>
    </location>
    <ligand>
        <name>substrate</name>
    </ligand>
</feature>
<feature type="binding site" evidence="2">
    <location>
        <position position="398"/>
    </location>
    <ligand>
        <name>substrate</name>
    </ligand>
</feature>